<organism>
    <name type="scientific">Arabidopsis thaliana</name>
    <name type="common">Mouse-ear cress</name>
    <dbReference type="NCBI Taxonomy" id="3702"/>
    <lineage>
        <taxon>Eukaryota</taxon>
        <taxon>Viridiplantae</taxon>
        <taxon>Streptophyta</taxon>
        <taxon>Embryophyta</taxon>
        <taxon>Tracheophyta</taxon>
        <taxon>Spermatophyta</taxon>
        <taxon>Magnoliopsida</taxon>
        <taxon>eudicotyledons</taxon>
        <taxon>Gunneridae</taxon>
        <taxon>Pentapetalae</taxon>
        <taxon>rosids</taxon>
        <taxon>malvids</taxon>
        <taxon>Brassicales</taxon>
        <taxon>Brassicaceae</taxon>
        <taxon>Camelineae</taxon>
        <taxon>Arabidopsis</taxon>
    </lineage>
</organism>
<evidence type="ECO:0000250" key="1"/>
<evidence type="ECO:0000255" key="2"/>
<evidence type="ECO:0000269" key="3">
    <source>
    </source>
</evidence>
<evidence type="ECO:0000269" key="4">
    <source>
    </source>
</evidence>
<evidence type="ECO:0000269" key="5">
    <source>
    </source>
</evidence>
<evidence type="ECO:0000305" key="6"/>
<feature type="chain" id="PRO_0000413574" description="Glutathione S-transferase T1">
    <location>
        <begin position="1"/>
        <end position="245"/>
    </location>
</feature>
<feature type="domain" description="GST N-terminal">
    <location>
        <begin position="2"/>
        <end position="83"/>
    </location>
</feature>
<feature type="domain" description="GST C-terminal">
    <location>
        <begin position="90"/>
        <end position="233"/>
    </location>
</feature>
<feature type="short sequence motif" description="Microbody targeting signal" evidence="2">
    <location>
        <begin position="243"/>
        <end position="245"/>
    </location>
</feature>
<feature type="binding site" evidence="1">
    <location>
        <begin position="12"/>
        <end position="13"/>
    </location>
    <ligand>
        <name>glutathione</name>
        <dbReference type="ChEBI" id="CHEBI:57925"/>
    </ligand>
</feature>
<feature type="binding site" evidence="1">
    <location>
        <begin position="41"/>
        <end position="42"/>
    </location>
    <ligand>
        <name>glutathione</name>
        <dbReference type="ChEBI" id="CHEBI:57925"/>
    </ligand>
</feature>
<feature type="binding site" evidence="1">
    <location>
        <begin position="54"/>
        <end position="55"/>
    </location>
    <ligand>
        <name>glutathione</name>
        <dbReference type="ChEBI" id="CHEBI:57925"/>
    </ligand>
</feature>
<feature type="binding site" evidence="1">
    <location>
        <begin position="67"/>
        <end position="68"/>
    </location>
    <ligand>
        <name>glutathione</name>
        <dbReference type="ChEBI" id="CHEBI:57925"/>
    </ligand>
</feature>
<reference key="1">
    <citation type="online journal article" date="1999" name="Plant Gene Register">
        <title>Identification and cloning of AtGST 10, members of a novel type of plant glutathione transferases.</title>
        <authorList>
            <person name="Dixon D.P."/>
            <person name="Cole D.J."/>
            <person name="Edwards R."/>
        </authorList>
        <locator>PGR99-053</locator>
    </citation>
    <scope>NUCLEOTIDE SEQUENCE [MRNA]</scope>
    <source>
        <strain>cv. Columbia</strain>
    </source>
</reference>
<reference key="2">
    <citation type="journal article" date="1998" name="DNA Res.">
        <title>Structural analysis of Arabidopsis thaliana chromosome 5. IV. Sequence features of the regions of 1,456,315 bp covered by nineteen physically assigned P1 and TAC clones.</title>
        <authorList>
            <person name="Sato S."/>
            <person name="Kaneko T."/>
            <person name="Kotani H."/>
            <person name="Nakamura Y."/>
            <person name="Asamizu E."/>
            <person name="Miyajima N."/>
            <person name="Tabata S."/>
        </authorList>
    </citation>
    <scope>NUCLEOTIDE SEQUENCE [LARGE SCALE GENOMIC DNA]</scope>
    <source>
        <strain>cv. Columbia</strain>
    </source>
</reference>
<reference key="3">
    <citation type="journal article" date="2017" name="Plant J.">
        <title>Araport11: a complete reannotation of the Arabidopsis thaliana reference genome.</title>
        <authorList>
            <person name="Cheng C.Y."/>
            <person name="Krishnakumar V."/>
            <person name="Chan A.P."/>
            <person name="Thibaud-Nissen F."/>
            <person name="Schobel S."/>
            <person name="Town C.D."/>
        </authorList>
    </citation>
    <scope>GENOME REANNOTATION</scope>
    <source>
        <strain>cv. Columbia</strain>
    </source>
</reference>
<reference key="4">
    <citation type="journal article" date="2003" name="Science">
        <title>Empirical analysis of transcriptional activity in the Arabidopsis genome.</title>
        <authorList>
            <person name="Yamada K."/>
            <person name="Lim J."/>
            <person name="Dale J.M."/>
            <person name="Chen H."/>
            <person name="Shinn P."/>
            <person name="Palm C.J."/>
            <person name="Southwick A.M."/>
            <person name="Wu H.C."/>
            <person name="Kim C.J."/>
            <person name="Nguyen M."/>
            <person name="Pham P.K."/>
            <person name="Cheuk R.F."/>
            <person name="Karlin-Newmann G."/>
            <person name="Liu S.X."/>
            <person name="Lam B."/>
            <person name="Sakano H."/>
            <person name="Wu T."/>
            <person name="Yu G."/>
            <person name="Miranda M."/>
            <person name="Quach H.L."/>
            <person name="Tripp M."/>
            <person name="Chang C.H."/>
            <person name="Lee J.M."/>
            <person name="Toriumi M.J."/>
            <person name="Chan M.M."/>
            <person name="Tang C.C."/>
            <person name="Onodera C.S."/>
            <person name="Deng J.M."/>
            <person name="Akiyama K."/>
            <person name="Ansari Y."/>
            <person name="Arakawa T."/>
            <person name="Banh J."/>
            <person name="Banno F."/>
            <person name="Bowser L."/>
            <person name="Brooks S.Y."/>
            <person name="Carninci P."/>
            <person name="Chao Q."/>
            <person name="Choy N."/>
            <person name="Enju A."/>
            <person name="Goldsmith A.D."/>
            <person name="Gurjal M."/>
            <person name="Hansen N.F."/>
            <person name="Hayashizaki Y."/>
            <person name="Johnson-Hopson C."/>
            <person name="Hsuan V.W."/>
            <person name="Iida K."/>
            <person name="Karnes M."/>
            <person name="Khan S."/>
            <person name="Koesema E."/>
            <person name="Ishida J."/>
            <person name="Jiang P.X."/>
            <person name="Jones T."/>
            <person name="Kawai J."/>
            <person name="Kamiya A."/>
            <person name="Meyers C."/>
            <person name="Nakajima M."/>
            <person name="Narusaka M."/>
            <person name="Seki M."/>
            <person name="Sakurai T."/>
            <person name="Satou M."/>
            <person name="Tamse R."/>
            <person name="Vaysberg M."/>
            <person name="Wallender E.K."/>
            <person name="Wong C."/>
            <person name="Yamamura Y."/>
            <person name="Yuan S."/>
            <person name="Shinozaki K."/>
            <person name="Davis R.W."/>
            <person name="Theologis A."/>
            <person name="Ecker J.R."/>
        </authorList>
    </citation>
    <scope>NUCLEOTIDE SEQUENCE [LARGE SCALE MRNA]</scope>
    <source>
        <strain>cv. Columbia</strain>
    </source>
</reference>
<reference key="5">
    <citation type="journal article" date="2002" name="Plant Mol. Biol.">
        <title>Probing the diversity of the Arabidopsis glutathione S-transferase gene family.</title>
        <authorList>
            <person name="Wagner U."/>
            <person name="Edwards R."/>
            <person name="Dixon D.P."/>
            <person name="Mauch F."/>
        </authorList>
    </citation>
    <scope>FUNCTION</scope>
    <scope>GENE FAMILY</scope>
    <scope>NOMENCLATURE</scope>
    <source>
        <strain>cv. Columbia</strain>
    </source>
</reference>
<reference key="6">
    <citation type="journal article" date="2007" name="Plant Cell">
        <title>Proteome analysis of Arabidopsis leaf peroxisomes reveals novel targeting peptides, metabolic pathways, and defense mechanisms.</title>
        <authorList>
            <person name="Reumann S."/>
            <person name="Babujee L."/>
            <person name="Ma C."/>
            <person name="Wienkoop S."/>
            <person name="Siemsen T."/>
            <person name="Antonicelli G.E."/>
            <person name="Rasche N."/>
            <person name="Lueder F."/>
            <person name="Weckwerth W."/>
            <person name="Jahn O."/>
        </authorList>
    </citation>
    <scope>SUBCELLULAR LOCATION</scope>
</reference>
<reference key="7">
    <citation type="journal article" date="2009" name="J. Exp. Bot.">
        <title>Enzyme activities and subcellular localization of members of the Arabidopsis glutathione transferase superfamily.</title>
        <authorList>
            <person name="Dixon D.P."/>
            <person name="Hawkins T."/>
            <person name="Hussey P.J."/>
            <person name="Edwards R."/>
        </authorList>
    </citation>
    <scope>SUBCELLULAR LOCATION</scope>
</reference>
<sequence>MMKLKVYADRMSQPSRAVIIFCKVNGIQFDEVLISLAKRQQLSPEFKDINPLGKVPAIVDGRLKLFESHAILIYLSSAFPSVADHWYPNDLSKRAKIHSVLDWHHTNLRRGAAGYVLNSVLGPALGLPLNPKAAAEAEQLLTKSLSTLETFWLKGNAKFLLGSNQPSIADLSLVCELMQLQVLDDKDRLRLLSTHKKVEQWIENTKKATMPHFDETHEILFKVKEGFQKRREMGTLSKPGLQSKI</sequence>
<proteinExistence type="evidence at transcript level"/>
<name>GSTT1_ARATH</name>
<gene>
    <name type="primary">GSTT1</name>
    <name type="synonym">GST10</name>
    <name type="ordered locus">At5g41210</name>
    <name type="ORF">MEE6.28</name>
</gene>
<comment type="function">
    <text evidence="3">In vitro, possesses glutathione S-transferase activity toward 1-chloro-2,4-dinitrobenzene (CDNB) and p-nitrobenzyl chloride (pNBC), and glutathione peroxidase activity toward cumene hydroperoxide and linoleic acid-13-hydroperoxide. May be involved in the conjugation of reduced glutathione to a wide number of exogenous and endogenous hydrophobic electrophiles and have a detoxification role against certain herbicides.</text>
</comment>
<comment type="catalytic activity">
    <reaction>
        <text>RX + glutathione = an S-substituted glutathione + a halide anion + H(+)</text>
        <dbReference type="Rhea" id="RHEA:16437"/>
        <dbReference type="ChEBI" id="CHEBI:15378"/>
        <dbReference type="ChEBI" id="CHEBI:16042"/>
        <dbReference type="ChEBI" id="CHEBI:17792"/>
        <dbReference type="ChEBI" id="CHEBI:57925"/>
        <dbReference type="ChEBI" id="CHEBI:90779"/>
        <dbReference type="EC" id="2.5.1.18"/>
    </reaction>
</comment>
<comment type="subcellular location">
    <subcellularLocation>
        <location evidence="5">Nucleus</location>
    </subcellularLocation>
    <subcellularLocation>
        <location evidence="4">Peroxisome</location>
    </subcellularLocation>
</comment>
<comment type="similarity">
    <text evidence="6">Belongs to the GST superfamily. Theta family.</text>
</comment>
<protein>
    <recommendedName>
        <fullName>Glutathione S-transferase T1</fullName>
        <shortName>AtGSTT1</shortName>
        <ecNumber>2.5.1.18</ecNumber>
    </recommendedName>
    <alternativeName>
        <fullName>GST class-theta member 1</fullName>
    </alternativeName>
    <alternativeName>
        <fullName>Glutathione S-transferase 10</fullName>
    </alternativeName>
</protein>
<keyword id="KW-0216">Detoxification</keyword>
<keyword id="KW-0539">Nucleus</keyword>
<keyword id="KW-0560">Oxidoreductase</keyword>
<keyword id="KW-0575">Peroxidase</keyword>
<keyword id="KW-0576">Peroxisome</keyword>
<keyword id="KW-1185">Reference proteome</keyword>
<keyword id="KW-0808">Transferase</keyword>
<accession>Q9ZRT5</accession>
<dbReference type="EC" id="2.5.1.18"/>
<dbReference type="EMBL" id="AJ131580">
    <property type="protein sequence ID" value="CAA10457.1"/>
    <property type="molecule type" value="mRNA"/>
</dbReference>
<dbReference type="EMBL" id="AB010072">
    <property type="protein sequence ID" value="BAB09723.1"/>
    <property type="molecule type" value="Genomic_DNA"/>
</dbReference>
<dbReference type="EMBL" id="CP002688">
    <property type="protein sequence ID" value="AED94654.1"/>
    <property type="molecule type" value="Genomic_DNA"/>
</dbReference>
<dbReference type="EMBL" id="AY054659">
    <property type="protein sequence ID" value="AAK96850.1"/>
    <property type="molecule type" value="mRNA"/>
</dbReference>
<dbReference type="EMBL" id="AY072466">
    <property type="protein sequence ID" value="AAL66881.1"/>
    <property type="molecule type" value="mRNA"/>
</dbReference>
<dbReference type="PIR" id="T51594">
    <property type="entry name" value="T51594"/>
</dbReference>
<dbReference type="RefSeq" id="NP_198937.1">
    <property type="nucleotide sequence ID" value="NM_123486.4"/>
</dbReference>
<dbReference type="SMR" id="Q9ZRT5"/>
<dbReference type="BioGRID" id="19374">
    <property type="interactions" value="2"/>
</dbReference>
<dbReference type="FunCoup" id="Q9ZRT5">
    <property type="interactions" value="1137"/>
</dbReference>
<dbReference type="IntAct" id="Q9ZRT5">
    <property type="interactions" value="1"/>
</dbReference>
<dbReference type="STRING" id="3702.Q9ZRT5"/>
<dbReference type="iPTMnet" id="Q9ZRT5"/>
<dbReference type="PaxDb" id="3702-AT5G41210.1"/>
<dbReference type="ProteomicsDB" id="247308"/>
<dbReference type="DNASU" id="834123"/>
<dbReference type="EnsemblPlants" id="AT5G41210.1">
    <property type="protein sequence ID" value="AT5G41210.1"/>
    <property type="gene ID" value="AT5G41210"/>
</dbReference>
<dbReference type="GeneID" id="834123"/>
<dbReference type="Gramene" id="AT5G41210.1">
    <property type="protein sequence ID" value="AT5G41210.1"/>
    <property type="gene ID" value="AT5G41210"/>
</dbReference>
<dbReference type="KEGG" id="ath:AT5G41210"/>
<dbReference type="Araport" id="AT5G41210"/>
<dbReference type="TAIR" id="AT5G41210">
    <property type="gene designation" value="GSTT1"/>
</dbReference>
<dbReference type="eggNOG" id="KOG0867">
    <property type="taxonomic scope" value="Eukaryota"/>
</dbReference>
<dbReference type="HOGENOM" id="CLU_011226_2_0_1"/>
<dbReference type="InParanoid" id="Q9ZRT5"/>
<dbReference type="OMA" id="CQYRVDE"/>
<dbReference type="OrthoDB" id="422574at2759"/>
<dbReference type="PhylomeDB" id="Q9ZRT5"/>
<dbReference type="BioCyc" id="ARA:AT5G41210-MONOMER"/>
<dbReference type="PRO" id="PR:Q9ZRT5"/>
<dbReference type="Proteomes" id="UP000006548">
    <property type="component" value="Chromosome 5"/>
</dbReference>
<dbReference type="ExpressionAtlas" id="Q9ZRT5">
    <property type="expression patterns" value="baseline and differential"/>
</dbReference>
<dbReference type="GO" id="GO:0005737">
    <property type="term" value="C:cytoplasm"/>
    <property type="evidence" value="ECO:0000303"/>
    <property type="project" value="TAIR"/>
</dbReference>
<dbReference type="GO" id="GO:0005634">
    <property type="term" value="C:nucleus"/>
    <property type="evidence" value="ECO:0007669"/>
    <property type="project" value="UniProtKB-SubCell"/>
</dbReference>
<dbReference type="GO" id="GO:0005777">
    <property type="term" value="C:peroxisome"/>
    <property type="evidence" value="ECO:0007005"/>
    <property type="project" value="TAIR"/>
</dbReference>
<dbReference type="GO" id="GO:0009536">
    <property type="term" value="C:plastid"/>
    <property type="evidence" value="ECO:0007005"/>
    <property type="project" value="TAIR"/>
</dbReference>
<dbReference type="GO" id="GO:0004364">
    <property type="term" value="F:glutathione transferase activity"/>
    <property type="evidence" value="ECO:0007669"/>
    <property type="project" value="UniProtKB-EC"/>
</dbReference>
<dbReference type="GO" id="GO:0004601">
    <property type="term" value="F:peroxidase activity"/>
    <property type="evidence" value="ECO:0007669"/>
    <property type="project" value="UniProtKB-KW"/>
</dbReference>
<dbReference type="GO" id="GO:0009407">
    <property type="term" value="P:toxin catabolic process"/>
    <property type="evidence" value="ECO:0000304"/>
    <property type="project" value="TAIR"/>
</dbReference>
<dbReference type="CDD" id="cd03183">
    <property type="entry name" value="GST_C_Theta"/>
    <property type="match status" value="1"/>
</dbReference>
<dbReference type="CDD" id="cd03050">
    <property type="entry name" value="GST_N_Theta"/>
    <property type="match status" value="1"/>
</dbReference>
<dbReference type="FunFam" id="3.40.30.10:FF:000341">
    <property type="entry name" value="Glutathione S-transferase T1"/>
    <property type="match status" value="1"/>
</dbReference>
<dbReference type="FunFam" id="1.20.1050.10:FF:000039">
    <property type="entry name" value="Glutathione S-transferase theta-1"/>
    <property type="match status" value="1"/>
</dbReference>
<dbReference type="Gene3D" id="1.20.1050.10">
    <property type="match status" value="1"/>
</dbReference>
<dbReference type="Gene3D" id="3.40.30.10">
    <property type="entry name" value="Glutaredoxin"/>
    <property type="match status" value="1"/>
</dbReference>
<dbReference type="InterPro" id="IPR010987">
    <property type="entry name" value="Glutathione-S-Trfase_C-like"/>
</dbReference>
<dbReference type="InterPro" id="IPR036282">
    <property type="entry name" value="Glutathione-S-Trfase_C_sf"/>
</dbReference>
<dbReference type="InterPro" id="IPR004045">
    <property type="entry name" value="Glutathione_S-Trfase_N"/>
</dbReference>
<dbReference type="InterPro" id="IPR040077">
    <property type="entry name" value="GST_C_Theta"/>
</dbReference>
<dbReference type="InterPro" id="IPR040075">
    <property type="entry name" value="GST_N_Theta"/>
</dbReference>
<dbReference type="InterPro" id="IPR043377">
    <property type="entry name" value="GSTT1/2/3"/>
</dbReference>
<dbReference type="InterPro" id="IPR036249">
    <property type="entry name" value="Thioredoxin-like_sf"/>
</dbReference>
<dbReference type="PANTHER" id="PTHR44750">
    <property type="entry name" value="GLUTATHIONE S-TRANSFERASE T1-RELATED"/>
    <property type="match status" value="1"/>
</dbReference>
<dbReference type="PANTHER" id="PTHR44750:SF1">
    <property type="entry name" value="GLUTATHIONE S-TRANSFERASE T1-RELATED"/>
    <property type="match status" value="1"/>
</dbReference>
<dbReference type="Pfam" id="PF13410">
    <property type="entry name" value="GST_C_2"/>
    <property type="match status" value="1"/>
</dbReference>
<dbReference type="Pfam" id="PF02798">
    <property type="entry name" value="GST_N"/>
    <property type="match status" value="1"/>
</dbReference>
<dbReference type="SFLD" id="SFLDG01153">
    <property type="entry name" value="Main.4:_Theta-like"/>
    <property type="match status" value="1"/>
</dbReference>
<dbReference type="SFLD" id="SFLDG00358">
    <property type="entry name" value="Main_(cytGST)"/>
    <property type="match status" value="1"/>
</dbReference>
<dbReference type="SUPFAM" id="SSF47616">
    <property type="entry name" value="GST C-terminal domain-like"/>
    <property type="match status" value="1"/>
</dbReference>
<dbReference type="SUPFAM" id="SSF52833">
    <property type="entry name" value="Thioredoxin-like"/>
    <property type="match status" value="1"/>
</dbReference>
<dbReference type="PROSITE" id="PS50405">
    <property type="entry name" value="GST_CTER"/>
    <property type="match status" value="1"/>
</dbReference>
<dbReference type="PROSITE" id="PS50404">
    <property type="entry name" value="GST_NTER"/>
    <property type="match status" value="1"/>
</dbReference>